<name>YIDD_NITEC</name>
<feature type="chain" id="PRO_1000013105" description="Putative membrane protein insertion efficiency factor">
    <location>
        <begin position="1"/>
        <end position="69"/>
    </location>
</feature>
<dbReference type="EMBL" id="CP000450">
    <property type="protein sequence ID" value="ABI60375.1"/>
    <property type="molecule type" value="Genomic_DNA"/>
</dbReference>
<dbReference type="RefSeq" id="WP_011635172.1">
    <property type="nucleotide sequence ID" value="NC_008344.1"/>
</dbReference>
<dbReference type="STRING" id="335283.Neut_2153"/>
<dbReference type="KEGG" id="net:Neut_2153"/>
<dbReference type="eggNOG" id="COG0759">
    <property type="taxonomic scope" value="Bacteria"/>
</dbReference>
<dbReference type="HOGENOM" id="CLU_144811_6_0_4"/>
<dbReference type="OrthoDB" id="9801753at2"/>
<dbReference type="Proteomes" id="UP000001966">
    <property type="component" value="Chromosome"/>
</dbReference>
<dbReference type="GO" id="GO:0005886">
    <property type="term" value="C:plasma membrane"/>
    <property type="evidence" value="ECO:0007669"/>
    <property type="project" value="UniProtKB-SubCell"/>
</dbReference>
<dbReference type="HAMAP" id="MF_00386">
    <property type="entry name" value="UPF0161_YidD"/>
    <property type="match status" value="1"/>
</dbReference>
<dbReference type="InterPro" id="IPR002696">
    <property type="entry name" value="Membr_insert_effic_factor_YidD"/>
</dbReference>
<dbReference type="NCBIfam" id="TIGR00278">
    <property type="entry name" value="membrane protein insertion efficiency factor YidD"/>
    <property type="match status" value="1"/>
</dbReference>
<dbReference type="PANTHER" id="PTHR33383">
    <property type="entry name" value="MEMBRANE PROTEIN INSERTION EFFICIENCY FACTOR-RELATED"/>
    <property type="match status" value="1"/>
</dbReference>
<dbReference type="PANTHER" id="PTHR33383:SF1">
    <property type="entry name" value="MEMBRANE PROTEIN INSERTION EFFICIENCY FACTOR-RELATED"/>
    <property type="match status" value="1"/>
</dbReference>
<dbReference type="Pfam" id="PF01809">
    <property type="entry name" value="YidD"/>
    <property type="match status" value="1"/>
</dbReference>
<dbReference type="SMART" id="SM01234">
    <property type="entry name" value="Haemolytic"/>
    <property type="match status" value="1"/>
</dbReference>
<keyword id="KW-0997">Cell inner membrane</keyword>
<keyword id="KW-1003">Cell membrane</keyword>
<keyword id="KW-0472">Membrane</keyword>
<reference key="1">
    <citation type="journal article" date="2007" name="Environ. Microbiol.">
        <title>Whole-genome analysis of the ammonia-oxidizing bacterium, Nitrosomonas eutropha C91: implications for niche adaptation.</title>
        <authorList>
            <person name="Stein L.Y."/>
            <person name="Arp D.J."/>
            <person name="Berube P.M."/>
            <person name="Chain P.S."/>
            <person name="Hauser L."/>
            <person name="Jetten M.S."/>
            <person name="Klotz M.G."/>
            <person name="Larimer F.W."/>
            <person name="Norton J.M."/>
            <person name="Op den Camp H.J.M."/>
            <person name="Shin M."/>
            <person name="Wei X."/>
        </authorList>
    </citation>
    <scope>NUCLEOTIDE SEQUENCE [LARGE SCALE GENOMIC DNA]</scope>
    <source>
        <strain>DSM 101675 / C91 / Nm57</strain>
    </source>
</reference>
<gene>
    <name type="ordered locus">Neut_2153</name>
</gene>
<comment type="function">
    <text evidence="1">Could be involved in insertion of integral membrane proteins into the membrane.</text>
</comment>
<comment type="subcellular location">
    <subcellularLocation>
        <location evidence="1">Cell inner membrane</location>
        <topology evidence="1">Peripheral membrane protein</topology>
        <orientation evidence="1">Cytoplasmic side</orientation>
    </subcellularLocation>
</comment>
<comment type="similarity">
    <text evidence="1">Belongs to the UPF0161 family.</text>
</comment>
<evidence type="ECO:0000255" key="1">
    <source>
        <dbReference type="HAMAP-Rule" id="MF_00386"/>
    </source>
</evidence>
<proteinExistence type="inferred from homology"/>
<sequence length="69" mass="7974">MKQLIIGLIKLYQYSIGLLIPPSCRFYPTCSNYMREALTKHGLIKGLWLGTRRILRCHPWNPGGYDPIP</sequence>
<organism>
    <name type="scientific">Nitrosomonas eutropha (strain DSM 101675 / C91 / Nm57)</name>
    <dbReference type="NCBI Taxonomy" id="335283"/>
    <lineage>
        <taxon>Bacteria</taxon>
        <taxon>Pseudomonadati</taxon>
        <taxon>Pseudomonadota</taxon>
        <taxon>Betaproteobacteria</taxon>
        <taxon>Nitrosomonadales</taxon>
        <taxon>Nitrosomonadaceae</taxon>
        <taxon>Nitrosomonas</taxon>
    </lineage>
</organism>
<accession>Q0AE57</accession>
<protein>
    <recommendedName>
        <fullName evidence="1">Putative membrane protein insertion efficiency factor</fullName>
    </recommendedName>
</protein>